<protein>
    <recommendedName>
        <fullName>Heparanase</fullName>
        <ecNumber>3.2.1.166</ecNumber>
    </recommendedName>
    <alternativeName>
        <fullName>Endo-glucoronidase</fullName>
    </alternativeName>
    <alternativeName>
        <fullName>Heparanase-1</fullName>
        <shortName>Hpa1</shortName>
    </alternativeName>
    <component>
        <recommendedName>
            <fullName>Heparanase 8 kDa subunit</fullName>
        </recommendedName>
    </component>
    <component>
        <recommendedName>
            <fullName>Heparanase 50 kDa subunit</fullName>
        </recommendedName>
    </component>
</protein>
<proteinExistence type="evidence at protein level"/>
<keyword id="KW-0002">3D-structure</keyword>
<keyword id="KW-0025">Alternative splicing</keyword>
<keyword id="KW-0106">Calcium</keyword>
<keyword id="KW-0130">Cell adhesion</keyword>
<keyword id="KW-0903">Direct protein sequencing</keyword>
<keyword id="KW-1015">Disulfide bond</keyword>
<keyword id="KW-0325">Glycoprotein</keyword>
<keyword id="KW-0378">Hydrolase</keyword>
<keyword id="KW-0458">Lysosome</keyword>
<keyword id="KW-0460">Magnesium</keyword>
<keyword id="KW-0472">Membrane</keyword>
<keyword id="KW-0539">Nucleus</keyword>
<keyword id="KW-1267">Proteomics identification</keyword>
<keyword id="KW-1185">Reference proteome</keyword>
<keyword id="KW-0964">Secreted</keyword>
<keyword id="KW-0732">Signal</keyword>
<name>HPSE_HUMAN</name>
<sequence>MLLRSKPALPPPLMLLLLGPLGPLSPGALPRPAQAQDVVDLDFFTQEPLHLVSPSFLSVTIDANLATDPRFLILLGSPKLRTLARGLSPAYLRFGGTKTDFLIFDPKKESTFEERSYWQSQVNQDICKYGSIPPDVEEKLRLEWPYQEQLLLREHYQKKFKNSTYSRSSVDVLYTFANCSGLDLIFGLNALLRTADLQWNSSNAQLLLDYCSSKGYNISWELGNEPNSFLKKADIFINGSQLGEDFIQLHKLLRKSTFKNAKLYGPDVGQPRRKTAKMLKSFLKAGGEVIDSVTWHHYYLNGRTATKEDFLNPDVLDIFISSVQKVFQVVESTRPGKKVWLGETSSAYGGGAPLLSDTFAAGFMWLDKLGLSARMGIEVVMRQVFFGAGNYHLVDENFDPLPDYWLSLLFKKLVGTKVLMASVQGSKRRKLRVYLHCTNTDNPRYKEGDLTLYAINLHNVTKYLRLPYPFSNKQVDKYLLRPLGPHGLLSKSVQLNGLTLKMVDDQTLPPLMEKPLRPGSSLGLPAFSYSFFVIRNAKVAACI</sequence>
<accession>Q9Y251</accession>
<accession>A9JIG7</accession>
<accession>C7F7I3</accession>
<accession>C7F7I4</accession>
<accession>E9PCA9</accession>
<accession>E9PGR1</accession>
<accession>Q53GE5</accession>
<accession>Q9UL39</accession>
<organism>
    <name type="scientific">Homo sapiens</name>
    <name type="common">Human</name>
    <dbReference type="NCBI Taxonomy" id="9606"/>
    <lineage>
        <taxon>Eukaryota</taxon>
        <taxon>Metazoa</taxon>
        <taxon>Chordata</taxon>
        <taxon>Craniata</taxon>
        <taxon>Vertebrata</taxon>
        <taxon>Euteleostomi</taxon>
        <taxon>Mammalia</taxon>
        <taxon>Eutheria</taxon>
        <taxon>Euarchontoglires</taxon>
        <taxon>Primates</taxon>
        <taxon>Haplorrhini</taxon>
        <taxon>Catarrhini</taxon>
        <taxon>Hominidae</taxon>
        <taxon>Homo</taxon>
    </lineage>
</organism>
<feature type="signal peptide" evidence="11">
    <location>
        <begin position="1"/>
        <end position="35"/>
    </location>
</feature>
<feature type="chain" id="PRO_0000042260" description="Heparanase 8 kDa subunit">
    <location>
        <begin position="36"/>
        <end position="109"/>
    </location>
</feature>
<feature type="propeptide" id="PRO_0000042261" description="Linker peptide" evidence="3 5 11">
    <location>
        <begin position="110"/>
        <end position="157"/>
    </location>
</feature>
<feature type="chain" id="PRO_0000042262" description="Heparanase 50 kDa subunit">
    <location>
        <begin position="158"/>
        <end position="543"/>
    </location>
</feature>
<feature type="region of interest" description="Required for heterodimerization with the heparanase 8 kDa subunit" evidence="13">
    <location>
        <begin position="288"/>
        <end position="417"/>
    </location>
</feature>
<feature type="region of interest" description="Required for transferring proheparanase to the Golgi apparatus, secretion and subsequent enzyme activity and for enhancement of PKB/AKT1 phosphorylation">
    <location>
        <begin position="527"/>
        <end position="543"/>
    </location>
</feature>
<feature type="active site" description="Proton donor" evidence="43 47">
    <location>
        <position position="225"/>
    </location>
</feature>
<feature type="active site" description="Nucleophile" evidence="43 45 46 47">
    <location>
        <position position="343"/>
    </location>
</feature>
<feature type="binding site" evidence="36 45 46 47 48">
    <location>
        <begin position="62"/>
        <end position="64"/>
    </location>
    <ligand>
        <name>heparan sulfate group</name>
        <dbReference type="ChEBI" id="CHEBI:157750"/>
    </ligand>
</feature>
<feature type="binding site" evidence="36 45 46 47">
    <location>
        <position position="97"/>
    </location>
    <ligand>
        <name>heparan sulfate group</name>
        <dbReference type="ChEBI" id="CHEBI:157750"/>
    </ligand>
</feature>
<feature type="binding site" evidence="20">
    <location>
        <begin position="158"/>
        <end position="162"/>
    </location>
    <ligand>
        <name>heparan sulfate group</name>
        <dbReference type="ChEBI" id="CHEBI:157750"/>
    </ligand>
</feature>
<feature type="binding site" evidence="20 36 48">
    <location>
        <begin position="270"/>
        <end position="280"/>
    </location>
    <ligand>
        <name>heparan sulfate group</name>
        <dbReference type="ChEBI" id="CHEBI:157750"/>
    </ligand>
</feature>
<feature type="binding site" evidence="36 48">
    <location>
        <position position="296"/>
    </location>
    <ligand>
        <name>heparan sulfate group</name>
        <dbReference type="ChEBI" id="CHEBI:157750"/>
    </ligand>
</feature>
<feature type="binding site" evidence="36 48">
    <location>
        <position position="303"/>
    </location>
    <ligand>
        <name>heparan sulfate group</name>
        <dbReference type="ChEBI" id="CHEBI:157750"/>
    </ligand>
</feature>
<feature type="binding site" evidence="36 45 46 47">
    <location>
        <begin position="348"/>
        <end position="350"/>
    </location>
    <ligand>
        <name>heparan sulfate group</name>
        <dbReference type="ChEBI" id="CHEBI:157750"/>
    </ligand>
</feature>
<feature type="binding site" evidence="36 45 46 47">
    <location>
        <begin position="389"/>
        <end position="391"/>
    </location>
    <ligand>
        <name>heparan sulfate group</name>
        <dbReference type="ChEBI" id="CHEBI:157750"/>
    </ligand>
</feature>
<feature type="glycosylation site" description="N-linked (GlcNAc...) asparagine" evidence="14 36 44 45">
    <location>
        <position position="162"/>
    </location>
</feature>
<feature type="glycosylation site" description="N-linked (GlcNAc...) asparagine" evidence="14">
    <location>
        <position position="178"/>
    </location>
</feature>
<feature type="glycosylation site" description="N-linked (GlcNAc...) asparagine" evidence="14 36 44 45 46 47 48">
    <location>
        <position position="200"/>
    </location>
</feature>
<feature type="glycosylation site" description="N-linked (GlcNAc...) asparagine" evidence="14 22 27 36 44">
    <location>
        <position position="217"/>
    </location>
</feature>
<feature type="glycosylation site" description="N-linked (GlcNAc...) asparagine" evidence="14 27 36 44 45 46 47 48">
    <location>
        <position position="238"/>
    </location>
</feature>
<feature type="glycosylation site" description="N-linked (GlcNAc...) asparagine" evidence="14 36 44 45 46 47 48">
    <location>
        <position position="459"/>
    </location>
</feature>
<feature type="disulfide bond" evidence="17 51 52">
    <location>
        <begin position="127"/>
        <end position="179"/>
    </location>
</feature>
<feature type="disulfide bond" evidence="17 36 44 45 46 47 48 49 50 51 52">
    <location>
        <begin position="437"/>
        <end position="542"/>
    </location>
</feature>
<feature type="splice variant" id="VSP_044537" description="In isoform 2." evidence="40">
    <original>RSSVDVLYTFANCSGLDLIFGLNALLRTADLQWNSSNAQLLLDYCSSKGYNISWELGNE</original>
    <variation>K</variation>
    <location>
        <begin position="167"/>
        <end position="225"/>
    </location>
</feature>
<feature type="splice variant" id="VSP_044664" description="In isoform 3." evidence="41">
    <location>
        <begin position="329"/>
        <end position="402"/>
    </location>
</feature>
<feature type="splice variant" id="VSP_053730" description="In isoform 4." evidence="41">
    <original>WLDKLGLSARMGIEVV</original>
    <variation>IIGYLFCSRNWWAPRC</variation>
    <location>
        <begin position="365"/>
        <end position="380"/>
    </location>
</feature>
<feature type="splice variant" id="VSP_053731" description="In isoform 4." evidence="41">
    <location>
        <begin position="381"/>
        <end position="543"/>
    </location>
</feature>
<feature type="sequence variant" id="VAR_023600" description="In some hepatocellular carcinoma." evidence="17">
    <original>N</original>
    <variation>S</variation>
    <location>
        <position position="260"/>
    </location>
</feature>
<feature type="sequence variant" id="VAR_068907" description="In dbSNP:rs11099592." evidence="2 3 4 5 6 18 24 37 38 39">
    <original>K</original>
    <variation>R</variation>
    <location>
        <position position="307"/>
    </location>
</feature>
<feature type="mutagenesis site" description="Alteration of the correct processing of heparanase which results in the cleavage at an upstream site in the linker peptide and no activation of proheparanase." evidence="19">
    <original>Y</original>
    <variation>A</variation>
    <variation>E</variation>
    <location>
        <position position="156"/>
    </location>
</feature>
<feature type="mutagenesis site" description="Normal processing." evidence="19">
    <original>Y</original>
    <variation>V</variation>
    <location>
        <position position="156"/>
    </location>
</feature>
<feature type="mutagenesis site" description="No association with GS-modified heparin; when associated with K-158." evidence="20">
    <original>K</original>
    <variation>A</variation>
    <location>
        <position position="158"/>
    </location>
</feature>
<feature type="mutagenesis site" description="Two-fold increase in the level of secretion upon addition of GS-modified heparin. No association with GS-modified heparin; when associated with K-161." evidence="20">
    <original>K</original>
    <variation>A</variation>
    <location>
        <position position="161"/>
    </location>
</feature>
<feature type="mutagenesis site" description="Faster electrophoretic migration typical of a size reduction and important decrease of secretion. Larger size reduction; when associated with Q-178; Q-200; Q-217; Q-238 and Q-459." evidence="14">
    <original>N</original>
    <variation>Q</variation>
    <location>
        <position position="162"/>
    </location>
</feature>
<feature type="mutagenesis site" description="Faster electrophoretic migration typical of a size reduction and important decrease of secretion. Larger size reduction; when associated with Q-162; Q-200; Q-217; Q-238 and Q-459." evidence="14">
    <original>N</original>
    <variation>Q</variation>
    <location>
        <position position="178"/>
    </location>
</feature>
<feature type="mutagenesis site" description="Faster electrophoretic migration typical of a size reduction and partial decrease in secretion. Larger size reduction; when associated with Q-162; Q-178; Q-217; Q-238 and Q-459." evidence="14">
    <original>N</original>
    <variation>Q</variation>
    <location>
        <position position="200"/>
    </location>
</feature>
<feature type="mutagenesis site" description="Faster electrophoretic migration typical of a size reduction and partial decrease in secretion. Larger size reduction; when associated with Q-162; Q-178; Q-200; Q-238 and Q-459." evidence="14">
    <original>N</original>
    <variation>Q</variation>
    <location>
        <position position="217"/>
    </location>
</feature>
<feature type="mutagenesis site" description="Loss of heparanase activity. No effect on HPSE-mediated cell adhesion." evidence="7 12">
    <original>E</original>
    <variation>A</variation>
    <location>
        <position position="225"/>
    </location>
</feature>
<feature type="mutagenesis site" description="Faster electrophoretic migration typical of a size reduction. Larger size reduction and important decrease of secretion; when associated with Q-162; Q-178; Q-200; Q-217 and Q-459." evidence="14">
    <original>N</original>
    <variation>Q</variation>
    <location>
        <position position="238"/>
    </location>
</feature>
<feature type="mutagenesis site" description="Loss of heparanase activity." evidence="7">
    <original>E</original>
    <variation>A</variation>
    <location>
        <position position="343"/>
    </location>
</feature>
<feature type="mutagenesis site" description="Strong decrease in heparanase activity." evidence="7">
    <original>D</original>
    <variation>A</variation>
    <location>
        <position position="367"/>
    </location>
</feature>
<feature type="mutagenesis site" description="No reduction in heparanase activity.">
    <original>E</original>
    <variation>A</variation>
    <location>
        <position position="378"/>
    </location>
</feature>
<feature type="mutagenesis site" description="No reduction in heparanase activity.">
    <original>E</original>
    <variation>A</variation>
    <location>
        <position position="396"/>
    </location>
</feature>
<feature type="mutagenesis site" description="Abolishes processing, secretion and enzyme activity." evidence="28">
    <original>V</original>
    <variation>K</variation>
    <location>
        <position position="414"/>
    </location>
</feature>
<feature type="mutagenesis site" description="No effect on processing nor secretion. No enzyme activity detected." evidence="28">
    <original>K</original>
    <variation>E</variation>
    <location>
        <position position="417"/>
    </location>
</feature>
<feature type="mutagenesis site" description="Faster electrophoretic migration typical of a size reduction. Larger size reduction and important decrease of secretion; when associated with Q-162; Q-178; Q-200; Q-217 and Q-238." evidence="14">
    <original>N</original>
    <variation>Q</variation>
    <location>
        <position position="459"/>
    </location>
</feature>
<feature type="mutagenesis site" description="No effect on processing nor secretion. No enzyme activity detected." evidence="28">
    <original>P</original>
    <variation>G</variation>
    <location>
        <position position="525"/>
    </location>
</feature>
<feature type="mutagenesis site" description="No effect on processing nor secretion. No enzyme activity detected." evidence="28">
    <original>F</original>
    <variation>R</variation>
    <location>
        <position position="527"/>
    </location>
</feature>
<feature type="mutagenesis site" description="No effect on processing nor secretion. No enzyme activity detected." evidence="28">
    <original>S</original>
    <variation>K</variation>
    <location>
        <position position="528"/>
    </location>
</feature>
<feature type="mutagenesis site" description="No effect on processing nor secretion. No enzyme activity detected." evidence="28">
    <original>Y</original>
    <variation>A</variation>
    <location>
        <position position="529"/>
    </location>
</feature>
<feature type="mutagenesis site" description="Abolishes processing, secretion and enzyme activity." evidence="28">
    <original>F</original>
    <variation>R</variation>
    <location>
        <position position="531"/>
    </location>
</feature>
<feature type="mutagenesis site" description="Abolishes processing, secretion and enzyme activity." evidence="28">
    <original>V</original>
    <variation>R</variation>
    <location>
        <position position="533"/>
    </location>
</feature>
<feature type="mutagenesis site" description="Abolishes processing, secretion and enzyme activity." evidence="28">
    <original>I</original>
    <variation>D</variation>
    <location>
        <position position="534"/>
    </location>
</feature>
<feature type="mutagenesis site" description="No effect on processing, secretion nor enzyme activity." evidence="28">
    <original>R</original>
    <variation>A</variation>
    <location>
        <position position="535"/>
    </location>
</feature>
<feature type="mutagenesis site" description="No effect on processing, secretion nor enzyme activity." evidence="28">
    <original>N</original>
    <variation>A</variation>
    <location>
        <position position="536"/>
    </location>
</feature>
<feature type="mutagenesis site" description="Abolishes processing, secretion and enzyme activity." evidence="28">
    <original>A</original>
    <variation>K</variation>
    <location>
        <position position="537"/>
    </location>
</feature>
<feature type="mutagenesis site" description="No effect on processing, secretion nor enzyme activity." evidence="28">
    <original>K</original>
    <variation>A</variation>
    <location>
        <position position="538"/>
    </location>
</feature>
<feature type="mutagenesis site" description="No effect on processing, secretion nor enzyme activity." evidence="28">
    <original>V</original>
    <variation>A</variation>
    <location>
        <position position="539"/>
    </location>
</feature>
<feature type="mutagenesis site" description="No effect on processing, secretion nor enzyme activity." evidence="28">
    <original>A</original>
    <variation>K</variation>
    <location>
        <position position="540"/>
    </location>
</feature>
<feature type="mutagenesis site" description="No effect on processing, secretion nor enzyme activity." evidence="28">
    <original>A</original>
    <variation>K</variation>
    <location>
        <position position="541"/>
    </location>
</feature>
<feature type="mutagenesis site" description="Abolishes processing, secretion and enzyme activity." evidence="28">
    <original>C</original>
    <variation>A</variation>
    <location>
        <position position="542"/>
    </location>
</feature>
<feature type="sequence conflict" description="In Ref. 5; AAD54516." evidence="42" ref="5">
    <original>L</original>
    <variation>LL</variation>
    <location>
        <position position="13"/>
    </location>
</feature>
<feature type="sequence conflict" description="In Ref. 5; AAD54516." evidence="42" ref="5">
    <original>Q</original>
    <variation>QQ</variation>
    <location>
        <position position="36"/>
    </location>
</feature>
<feature type="sequence conflict" description="In Ref. 11; BAD96706." evidence="42" ref="11">
    <original>D</original>
    <variation>G</variation>
    <location>
        <position position="291"/>
    </location>
</feature>
<feature type="helix" evidence="57">
    <location>
        <begin position="35"/>
        <end position="37"/>
    </location>
</feature>
<feature type="strand" evidence="55">
    <location>
        <begin position="38"/>
        <end position="44"/>
    </location>
</feature>
<feature type="strand" evidence="55">
    <location>
        <begin position="49"/>
        <end position="51"/>
    </location>
</feature>
<feature type="strand" evidence="55">
    <location>
        <begin position="57"/>
        <end position="62"/>
    </location>
</feature>
<feature type="helix" evidence="55">
    <location>
        <begin position="63"/>
        <end position="67"/>
    </location>
</feature>
<feature type="helix" evidence="55">
    <location>
        <begin position="71"/>
        <end position="75"/>
    </location>
</feature>
<feature type="helix" evidence="55">
    <location>
        <begin position="78"/>
        <end position="86"/>
    </location>
</feature>
<feature type="strand" evidence="55">
    <location>
        <begin position="89"/>
        <end position="96"/>
    </location>
</feature>
<feature type="helix" evidence="55">
    <location>
        <begin position="97"/>
        <end position="101"/>
    </location>
</feature>
<feature type="strand" evidence="55">
    <location>
        <begin position="102"/>
        <end position="104"/>
    </location>
</feature>
<feature type="helix" evidence="53">
    <location>
        <begin position="112"/>
        <end position="121"/>
    </location>
</feature>
<feature type="helix" evidence="53">
    <location>
        <begin position="126"/>
        <end position="129"/>
    </location>
</feature>
<feature type="helix" evidence="53">
    <location>
        <begin position="134"/>
        <end position="157"/>
    </location>
</feature>
<feature type="strand" evidence="55">
    <location>
        <begin position="163"/>
        <end position="165"/>
    </location>
</feature>
<feature type="helix" evidence="55">
    <location>
        <begin position="167"/>
        <end position="179"/>
    </location>
</feature>
<feature type="strand" evidence="55">
    <location>
        <begin position="182"/>
        <end position="188"/>
    </location>
</feature>
<feature type="strand" evidence="56">
    <location>
        <begin position="197"/>
        <end position="199"/>
    </location>
</feature>
<feature type="helix" evidence="55">
    <location>
        <begin position="202"/>
        <end position="213"/>
    </location>
</feature>
<feature type="strand" evidence="55">
    <location>
        <begin position="219"/>
        <end position="222"/>
    </location>
</feature>
<feature type="helix" evidence="55">
    <location>
        <begin position="226"/>
        <end position="228"/>
    </location>
</feature>
<feature type="helix" evidence="55">
    <location>
        <begin position="229"/>
        <end position="233"/>
    </location>
</feature>
<feature type="helix" evidence="55">
    <location>
        <begin position="239"/>
        <end position="255"/>
    </location>
</feature>
<feature type="strand" evidence="55">
    <location>
        <begin position="256"/>
        <end position="260"/>
    </location>
</feature>
<feature type="strand" evidence="55">
    <location>
        <begin position="263"/>
        <end position="268"/>
    </location>
</feature>
<feature type="helix" evidence="55">
    <location>
        <begin position="277"/>
        <end position="286"/>
    </location>
</feature>
<feature type="helix" evidence="55">
    <location>
        <begin position="287"/>
        <end position="289"/>
    </location>
</feature>
<feature type="strand" evidence="55">
    <location>
        <begin position="291"/>
        <end position="301"/>
    </location>
</feature>
<feature type="turn" evidence="55">
    <location>
        <begin position="302"/>
        <end position="304"/>
    </location>
</feature>
<feature type="helix" evidence="55">
    <location>
        <begin position="307"/>
        <end position="310"/>
    </location>
</feature>
<feature type="helix" evidence="55">
    <location>
        <begin position="313"/>
        <end position="333"/>
    </location>
</feature>
<feature type="strand" evidence="55">
    <location>
        <begin position="339"/>
        <end position="350"/>
    </location>
</feature>
<feature type="turn" evidence="55">
    <location>
        <begin position="353"/>
        <end position="357"/>
    </location>
</feature>
<feature type="helix" evidence="55">
    <location>
        <begin position="359"/>
        <end position="361"/>
    </location>
</feature>
<feature type="helix" evidence="55">
    <location>
        <begin position="362"/>
        <end position="375"/>
    </location>
</feature>
<feature type="strand" evidence="55">
    <location>
        <begin position="379"/>
        <end position="383"/>
    </location>
</feature>
<feature type="strand" evidence="55">
    <location>
        <begin position="385"/>
        <end position="389"/>
    </location>
</feature>
<feature type="helix" evidence="55">
    <location>
        <begin position="402"/>
        <end position="413"/>
    </location>
</feature>
<feature type="strand" evidence="55">
    <location>
        <begin position="414"/>
        <end position="418"/>
    </location>
</feature>
<feature type="strand" evidence="55">
    <location>
        <begin position="420"/>
        <end position="425"/>
    </location>
</feature>
<feature type="strand" evidence="55">
    <location>
        <begin position="429"/>
        <end position="438"/>
    </location>
</feature>
<feature type="strand" evidence="55">
    <location>
        <begin position="450"/>
        <end position="456"/>
    </location>
</feature>
<feature type="strand" evidence="55">
    <location>
        <begin position="458"/>
        <end position="460"/>
    </location>
</feature>
<feature type="strand" evidence="55">
    <location>
        <begin position="462"/>
        <end position="465"/>
    </location>
</feature>
<feature type="helix" evidence="55">
    <location>
        <begin position="470"/>
        <end position="472"/>
    </location>
</feature>
<feature type="strand" evidence="55">
    <location>
        <begin position="475"/>
        <end position="482"/>
    </location>
</feature>
<feature type="strand" evidence="54">
    <location>
        <begin position="484"/>
        <end position="486"/>
    </location>
</feature>
<feature type="helix" evidence="55">
    <location>
        <begin position="487"/>
        <end position="489"/>
    </location>
</feature>
<feature type="strand" evidence="55">
    <location>
        <begin position="493"/>
        <end position="495"/>
    </location>
</feature>
<feature type="strand" evidence="56">
    <location>
        <begin position="514"/>
        <end position="516"/>
    </location>
</feature>
<feature type="strand" evidence="55">
    <location>
        <begin position="522"/>
        <end position="524"/>
    </location>
</feature>
<feature type="strand" evidence="55">
    <location>
        <begin position="528"/>
        <end position="534"/>
    </location>
</feature>
<feature type="helix" evidence="55">
    <location>
        <begin position="540"/>
        <end position="542"/>
    </location>
</feature>
<evidence type="ECO:0000250" key="1"/>
<evidence type="ECO:0000269" key="2">
    <source>
    </source>
</evidence>
<evidence type="ECO:0000269" key="3">
    <source>
    </source>
</evidence>
<evidence type="ECO:0000269" key="4">
    <source>
    </source>
</evidence>
<evidence type="ECO:0000269" key="5">
    <source>
    </source>
</evidence>
<evidence type="ECO:0000269" key="6">
    <source>
    </source>
</evidence>
<evidence type="ECO:0000269" key="7">
    <source>
    </source>
</evidence>
<evidence type="ECO:0000269" key="8">
    <source>
    </source>
</evidence>
<evidence type="ECO:0000269" key="9">
    <source>
    </source>
</evidence>
<evidence type="ECO:0000269" key="10">
    <source>
    </source>
</evidence>
<evidence type="ECO:0000269" key="11">
    <source>
    </source>
</evidence>
<evidence type="ECO:0000269" key="12">
    <source>
    </source>
</evidence>
<evidence type="ECO:0000269" key="13">
    <source>
    </source>
</evidence>
<evidence type="ECO:0000269" key="14">
    <source>
    </source>
</evidence>
<evidence type="ECO:0000269" key="15">
    <source>
    </source>
</evidence>
<evidence type="ECO:0000269" key="16">
    <source>
    </source>
</evidence>
<evidence type="ECO:0000269" key="17">
    <source>
    </source>
</evidence>
<evidence type="ECO:0000269" key="18">
    <source>
    </source>
</evidence>
<evidence type="ECO:0000269" key="19">
    <source>
    </source>
</evidence>
<evidence type="ECO:0000269" key="20">
    <source>
    </source>
</evidence>
<evidence type="ECO:0000269" key="21">
    <source>
    </source>
</evidence>
<evidence type="ECO:0000269" key="22">
    <source>
    </source>
</evidence>
<evidence type="ECO:0000269" key="23">
    <source>
    </source>
</evidence>
<evidence type="ECO:0000269" key="24">
    <source>
    </source>
</evidence>
<evidence type="ECO:0000269" key="25">
    <source>
    </source>
</evidence>
<evidence type="ECO:0000269" key="26">
    <source>
    </source>
</evidence>
<evidence type="ECO:0000269" key="27">
    <source>
    </source>
</evidence>
<evidence type="ECO:0000269" key="28">
    <source>
    </source>
</evidence>
<evidence type="ECO:0000269" key="29">
    <source>
    </source>
</evidence>
<evidence type="ECO:0000269" key="30">
    <source>
    </source>
</evidence>
<evidence type="ECO:0000269" key="31">
    <source>
    </source>
</evidence>
<evidence type="ECO:0000269" key="32">
    <source>
    </source>
</evidence>
<evidence type="ECO:0000269" key="33">
    <source>
    </source>
</evidence>
<evidence type="ECO:0000269" key="34">
    <source>
    </source>
</evidence>
<evidence type="ECO:0000269" key="35">
    <source>
    </source>
</evidence>
<evidence type="ECO:0000269" key="36">
    <source>
    </source>
</evidence>
<evidence type="ECO:0000269" key="37">
    <source ref="10"/>
</evidence>
<evidence type="ECO:0000269" key="38">
    <source ref="11"/>
</evidence>
<evidence type="ECO:0000269" key="39">
    <source ref="9"/>
</evidence>
<evidence type="ECO:0000303" key="40">
    <source>
    </source>
</evidence>
<evidence type="ECO:0000303" key="41">
    <source ref="10"/>
</evidence>
<evidence type="ECO:0000305" key="42"/>
<evidence type="ECO:0000305" key="43">
    <source>
    </source>
</evidence>
<evidence type="ECO:0007744" key="44">
    <source>
        <dbReference type="PDB" id="5E8M"/>
    </source>
</evidence>
<evidence type="ECO:0007744" key="45">
    <source>
        <dbReference type="PDB" id="5E97"/>
    </source>
</evidence>
<evidence type="ECO:0007744" key="46">
    <source>
        <dbReference type="PDB" id="5E98"/>
    </source>
</evidence>
<evidence type="ECO:0007744" key="47">
    <source>
        <dbReference type="PDB" id="5E9B"/>
    </source>
</evidence>
<evidence type="ECO:0007744" key="48">
    <source>
        <dbReference type="PDB" id="5E9C"/>
    </source>
</evidence>
<evidence type="ECO:0007744" key="49">
    <source>
        <dbReference type="PDB" id="5L9Y"/>
    </source>
</evidence>
<evidence type="ECO:0007744" key="50">
    <source>
        <dbReference type="PDB" id="5L9Z"/>
    </source>
</evidence>
<evidence type="ECO:0007744" key="51">
    <source>
        <dbReference type="PDB" id="5LA4"/>
    </source>
</evidence>
<evidence type="ECO:0007744" key="52">
    <source>
        <dbReference type="PDB" id="5LA7"/>
    </source>
</evidence>
<evidence type="ECO:0007829" key="53">
    <source>
        <dbReference type="PDB" id="5LA4"/>
    </source>
</evidence>
<evidence type="ECO:0007829" key="54">
    <source>
        <dbReference type="PDB" id="7PR7"/>
    </source>
</evidence>
<evidence type="ECO:0007829" key="55">
    <source>
        <dbReference type="PDB" id="7RG8"/>
    </source>
</evidence>
<evidence type="ECO:0007829" key="56">
    <source>
        <dbReference type="PDB" id="8E07"/>
    </source>
</evidence>
<evidence type="ECO:0007829" key="57">
    <source>
        <dbReference type="PDB" id="8JYG"/>
    </source>
</evidence>
<gene>
    <name type="primary">HPSE</name>
    <name type="synonym">HEP</name>
    <name type="synonym">HPA</name>
    <name type="synonym">HPA1</name>
    <name type="synonym">HPR1</name>
    <name type="synonym">HPSE1</name>
    <name type="synonym">HSE1</name>
</gene>
<reference key="1">
    <citation type="journal article" date="1999" name="Biochem. Biophys. Res. Commun.">
        <title>Cloning and functional expression of a human heparanase gene.</title>
        <authorList>
            <person name="Kussie P.H."/>
            <person name="Hulmes J.D."/>
            <person name="Ludwig D.L."/>
            <person name="Patel S."/>
            <person name="Navarro E.C."/>
            <person name="Seddon A.P."/>
            <person name="Giorgio N.A."/>
            <person name="Bohlen P."/>
        </authorList>
    </citation>
    <scope>NUCLEOTIDE SEQUENCE [MRNA] (ISOFORM 1)</scope>
    <scope>VARIANT ARG-307</scope>
    <scope>TISSUE SPECIFICITY</scope>
    <source>
        <tissue>Placenta</tissue>
    </source>
</reference>
<reference key="2">
    <citation type="journal article" date="1999" name="J. Biol. Chem.">
        <title>Human heparanase. Purification, characterization, cloning, and expression.</title>
        <authorList>
            <person name="Toyoshima M."/>
            <person name="Nakajima M."/>
        </authorList>
    </citation>
    <scope>NUCLEOTIDE SEQUENCE [MRNA] (ISOFORM 1)</scope>
    <scope>BIOPHYSICOCHEMICAL PROPERTIES</scope>
    <scope>PROTEIN SEQUENCE OF 158-168; 326-337 AND 447-491</scope>
    <scope>VARIANT ARG-307</scope>
    <source>
        <tissue>Embryonic fibroblast</tissue>
    </source>
</reference>
<reference key="3">
    <citation type="journal article" date="1999" name="Nat. Med.">
        <title>Mammalian heparanase: gene cloning, expression and function in tumor progression and metastasis.</title>
        <authorList>
            <person name="Vlodavsky I."/>
            <person name="Friedmann Y."/>
            <person name="Elkin M."/>
            <person name="Aingorn H."/>
            <person name="Atzmon R."/>
            <person name="Ishai-Michaeli R."/>
            <person name="Bitan M."/>
            <person name="Pappo O."/>
            <person name="Peretz T."/>
            <person name="Michal I."/>
            <person name="Spector L."/>
            <person name="Pecker I."/>
        </authorList>
    </citation>
    <scope>NUCLEOTIDE SEQUENCE [MRNA] (ISOFORM 1)</scope>
    <scope>GLYCOSYLATION</scope>
    <scope>PROTEOLYTIC PROCESSING</scope>
    <scope>VARIANT ARG-307</scope>
</reference>
<reference key="4">
    <citation type="journal article" date="1999" name="Nat. Med.">
        <title>Cloning of mammalian heparanase, an important enzyme in tumor invasion and metastasis.</title>
        <authorList>
            <person name="Hulett M.D."/>
            <person name="Freeman C."/>
            <person name="Hamdorf B.J."/>
            <person name="Baker R.T."/>
            <person name="Harris M.J."/>
            <person name="Parish C.R."/>
        </authorList>
    </citation>
    <scope>NUCLEOTIDE SEQUENCE [MRNA] (ISOFORM 1)</scope>
    <scope>TISSUE SPECIFICITY</scope>
    <scope>PROTEIN SEQUENCE OF 158-174; 263-272; 326-337; 433-436; 438-443; 466-468 AND 478-483</scope>
    <scope>VARIANT ARG-307</scope>
    <source>
        <tissue>Placenta</tissue>
    </source>
</reference>
<reference key="5">
    <citation type="journal article" date="2000" name="Glycobiology">
        <title>Heparanase expression in invasive trophoblasts and acute vascular damage.</title>
        <authorList>
            <person name="Dempsey L.A."/>
            <person name="Plummer T.B."/>
            <person name="Coombes S.L."/>
            <person name="Platt J.L."/>
        </authorList>
    </citation>
    <scope>NUCLEOTIDE SEQUENCE [MRNA] (ISOFORM 1)</scope>
    <scope>BIOPHYSICOCHEMICAL PROPERTIES</scope>
    <scope>TISSUE SPECIFICITY</scope>
    <scope>VARIANT ARG-307</scope>
    <source>
        <tissue>Placenta</tissue>
    </source>
</reference>
<reference key="6">
    <citation type="journal article" date="2001" name="J. Mammary Gland Biol. Neoplasia">
        <title>Molecular properties and involvement of heparanase in cancer progression and mammary gland morphogenesis.</title>
        <authorList>
            <person name="Zcharia E."/>
            <person name="Metzger S."/>
            <person name="Chajek-Shaul T."/>
            <person name="Friedmann Y."/>
            <person name="Pappo O."/>
            <person name="Aviv A."/>
            <person name="Elkin M."/>
            <person name="Pecker I."/>
            <person name="Peretz T."/>
            <person name="Vlodavsky I."/>
        </authorList>
    </citation>
    <scope>NUCLEOTIDE SEQUENCE [MRNA] (ISOFORM 1)</scope>
    <scope>SUBCELLULAR LOCATION</scope>
</reference>
<reference key="7">
    <citation type="journal article" date="2003" name="Biochem. J.">
        <title>Biochemical characterization of the active heterodimer form of human heparanase (Hpa1) protein expressed in insect cells.</title>
        <authorList>
            <person name="McKenzie E."/>
            <person name="Young K."/>
            <person name="Hircock M."/>
            <person name="Bennett J."/>
            <person name="Bhaman M."/>
            <person name="Felix R."/>
            <person name="Turner P."/>
            <person name="Stamps A."/>
            <person name="McMillan D."/>
            <person name="Saville G."/>
            <person name="Ng S."/>
            <person name="Mason S."/>
            <person name="Snell D."/>
            <person name="Schofield D."/>
            <person name="Gong H."/>
            <person name="Townsend R."/>
            <person name="Gallagher J."/>
            <person name="Page M."/>
            <person name="Parekh R."/>
            <person name="Stubberfield C."/>
        </authorList>
    </citation>
    <scope>NUCLEOTIDE SEQUENCE [MRNA] (ISOFORM 1)</scope>
    <scope>PROTEIN SEQUENCE OF 36-41 AND 158-163</scope>
    <scope>SUBUNIT</scope>
    <scope>GLYCOSYLATION</scope>
    <scope>BIOPHYSICOCHEMICAL PROPERTIES</scope>
    <source>
        <tissue>Placenta</tissue>
    </source>
</reference>
<reference key="8">
    <citation type="journal article" date="2007" name="Biochem. Biophys. Res. Commun.">
        <title>Cloning, expression, and characterization of an alternatively spliced variant of human heparanase.</title>
        <authorList>
            <person name="Nasser N.J."/>
            <person name="Avivi A."/>
            <person name="Shushy M."/>
            <person name="Vlodavsky I."/>
            <person name="Nevo E."/>
        </authorList>
    </citation>
    <scope>NUCLEOTIDE SEQUENCE [MRNA] (ISOFORM 2)</scope>
    <scope>ALTERNATIVE SPLICING</scope>
    <scope>VARIANT ARG-307</scope>
    <source>
        <tissue>Kidney</tissue>
    </source>
</reference>
<reference key="9">
    <citation type="submission" date="2005-02" db="EMBL/GenBank/DDBJ databases">
        <title>Cloned heparanase from MCF-7 cells.</title>
        <authorList>
            <person name="Pinhal M.A."/>
            <person name="Semedo P."/>
        </authorList>
    </citation>
    <scope>NUCLEOTIDE SEQUENCE [MRNA] (ISOFORM 1)</scope>
    <scope>VARIANT ARG-307</scope>
</reference>
<reference key="10">
    <citation type="submission" date="2009-06" db="EMBL/GenBank/DDBJ databases">
        <title>Two new transcript variants of Homo sapiens heparanase (HPSE).</title>
        <authorList>
            <person name="Jin S."/>
            <person name="Yu L."/>
            <person name="Gong F."/>
        </authorList>
    </citation>
    <scope>NUCLEOTIDE SEQUENCE [MRNA] (ISOFORMS 3 AND 4)</scope>
    <scope>VARIANT ARG-307</scope>
</reference>
<reference key="11">
    <citation type="submission" date="2005-04" db="EMBL/GenBank/DDBJ databases">
        <authorList>
            <person name="Suzuki Y."/>
            <person name="Sugano S."/>
            <person name="Totoki Y."/>
            <person name="Toyoda A."/>
            <person name="Takeda T."/>
            <person name="Sakaki Y."/>
            <person name="Tanaka A."/>
            <person name="Yokoyama S."/>
        </authorList>
    </citation>
    <scope>NUCLEOTIDE SEQUENCE [LARGE SCALE MRNA] (ISOFORM 1)</scope>
    <scope>VARIANT ARG-307</scope>
    <source>
        <tissue>Small intestine</tissue>
    </source>
</reference>
<reference key="12">
    <citation type="journal article" date="2005" name="Nature">
        <title>Generation and annotation of the DNA sequences of human chromosomes 2 and 4.</title>
        <authorList>
            <person name="Hillier L.W."/>
            <person name="Graves T.A."/>
            <person name="Fulton R.S."/>
            <person name="Fulton L.A."/>
            <person name="Pepin K.H."/>
            <person name="Minx P."/>
            <person name="Wagner-McPherson C."/>
            <person name="Layman D."/>
            <person name="Wylie K."/>
            <person name="Sekhon M."/>
            <person name="Becker M.C."/>
            <person name="Fewell G.A."/>
            <person name="Delehaunty K.D."/>
            <person name="Miner T.L."/>
            <person name="Nash W.E."/>
            <person name="Kremitzki C."/>
            <person name="Oddy L."/>
            <person name="Du H."/>
            <person name="Sun H."/>
            <person name="Bradshaw-Cordum H."/>
            <person name="Ali J."/>
            <person name="Carter J."/>
            <person name="Cordes M."/>
            <person name="Harris A."/>
            <person name="Isak A."/>
            <person name="van Brunt A."/>
            <person name="Nguyen C."/>
            <person name="Du F."/>
            <person name="Courtney L."/>
            <person name="Kalicki J."/>
            <person name="Ozersky P."/>
            <person name="Abbott S."/>
            <person name="Armstrong J."/>
            <person name="Belter E.A."/>
            <person name="Caruso L."/>
            <person name="Cedroni M."/>
            <person name="Cotton M."/>
            <person name="Davidson T."/>
            <person name="Desai A."/>
            <person name="Elliott G."/>
            <person name="Erb T."/>
            <person name="Fronick C."/>
            <person name="Gaige T."/>
            <person name="Haakenson W."/>
            <person name="Haglund K."/>
            <person name="Holmes A."/>
            <person name="Harkins R."/>
            <person name="Kim K."/>
            <person name="Kruchowski S.S."/>
            <person name="Strong C.M."/>
            <person name="Grewal N."/>
            <person name="Goyea E."/>
            <person name="Hou S."/>
            <person name="Levy A."/>
            <person name="Martinka S."/>
            <person name="Mead K."/>
            <person name="McLellan M.D."/>
            <person name="Meyer R."/>
            <person name="Randall-Maher J."/>
            <person name="Tomlinson C."/>
            <person name="Dauphin-Kohlberg S."/>
            <person name="Kozlowicz-Reilly A."/>
            <person name="Shah N."/>
            <person name="Swearengen-Shahid S."/>
            <person name="Snider J."/>
            <person name="Strong J.T."/>
            <person name="Thompson J."/>
            <person name="Yoakum M."/>
            <person name="Leonard S."/>
            <person name="Pearman C."/>
            <person name="Trani L."/>
            <person name="Radionenko M."/>
            <person name="Waligorski J.E."/>
            <person name="Wang C."/>
            <person name="Rock S.M."/>
            <person name="Tin-Wollam A.-M."/>
            <person name="Maupin R."/>
            <person name="Latreille P."/>
            <person name="Wendl M.C."/>
            <person name="Yang S.-P."/>
            <person name="Pohl C."/>
            <person name="Wallis J.W."/>
            <person name="Spieth J."/>
            <person name="Bieri T.A."/>
            <person name="Berkowicz N."/>
            <person name="Nelson J.O."/>
            <person name="Osborne J."/>
            <person name="Ding L."/>
            <person name="Meyer R."/>
            <person name="Sabo A."/>
            <person name="Shotland Y."/>
            <person name="Sinha P."/>
            <person name="Wohldmann P.E."/>
            <person name="Cook L.L."/>
            <person name="Hickenbotham M.T."/>
            <person name="Eldred J."/>
            <person name="Williams D."/>
            <person name="Jones T.A."/>
            <person name="She X."/>
            <person name="Ciccarelli F.D."/>
            <person name="Izaurralde E."/>
            <person name="Taylor J."/>
            <person name="Schmutz J."/>
            <person name="Myers R.M."/>
            <person name="Cox D.R."/>
            <person name="Huang X."/>
            <person name="McPherson J.D."/>
            <person name="Mardis E.R."/>
            <person name="Clifton S.W."/>
            <person name="Warren W.C."/>
            <person name="Chinwalla A.T."/>
            <person name="Eddy S.R."/>
            <person name="Marra M.A."/>
            <person name="Ovcharenko I."/>
            <person name="Furey T.S."/>
            <person name="Miller W."/>
            <person name="Eichler E.E."/>
            <person name="Bork P."/>
            <person name="Suyama M."/>
            <person name="Torrents D."/>
            <person name="Waterston R.H."/>
            <person name="Wilson R.K."/>
        </authorList>
    </citation>
    <scope>NUCLEOTIDE SEQUENCE [LARGE SCALE GENOMIC DNA]</scope>
</reference>
<reference key="13">
    <citation type="journal article" date="2004" name="Genome Res.">
        <title>The status, quality, and expansion of the NIH full-length cDNA project: the Mammalian Gene Collection (MGC).</title>
        <authorList>
            <consortium name="The MGC Project Team"/>
        </authorList>
    </citation>
    <scope>NUCLEOTIDE SEQUENCE [LARGE SCALE MRNA] (ISOFORM 1)</scope>
    <scope>VARIANT ARG-307</scope>
    <source>
        <tissue>Pancreas</tissue>
    </source>
</reference>
<reference key="14">
    <citation type="journal article" date="2000" name="Biochemistry">
        <title>Identification of active-site residues of the pro-metastatic endoglycosidase heparanase.</title>
        <authorList>
            <person name="Hulett M.D."/>
            <person name="Hornby J.R."/>
            <person name="Ohms S.J."/>
            <person name="Zuegg J."/>
            <person name="Freeman C."/>
            <person name="Gready J.E."/>
            <person name="Parish C.R."/>
        </authorList>
    </citation>
    <scope>MUTAGENESIS OF GLU-225; GLU-343 AND ASP-367</scope>
</reference>
<reference key="15">
    <citation type="journal article" date="2002" name="Exp. Cell Res.">
        <title>Human heparanase is localized within lysosomes in a stable form.</title>
        <authorList>
            <person name="Goldshmidt O."/>
            <person name="Nadav L."/>
            <person name="Aingorn H."/>
            <person name="Irit C."/>
            <person name="Feinstein N."/>
            <person name="Ilan N."/>
            <person name="Zamir E."/>
            <person name="Geiger B."/>
            <person name="Vlodavsky I."/>
            <person name="Katz B.Z."/>
        </authorList>
    </citation>
    <scope>SUBCELLULAR LOCATION</scope>
    <scope>PROTEOLYTIC PROCESSING</scope>
    <scope>INTERACTION WITH SDC1</scope>
</reference>
<reference key="16">
    <citation type="journal article" date="2002" name="J. Biol. Chem.">
        <title>Structural recognition by recombinant human heparanase that plays critical roles in tumor metastasis. Hierarchical sulfate groups with different effects and the essential target disulfated trisaccharide sequence.</title>
        <authorList>
            <person name="Okada Y."/>
            <person name="Yamada S."/>
            <person name="Toyoshima M."/>
            <person name="Dong J."/>
            <person name="Nakajima M."/>
            <person name="Sugahara K."/>
        </authorList>
    </citation>
    <scope>CATALYTIC ACTIVITY</scope>
    <scope>FUNCTION</scope>
</reference>
<reference key="17">
    <citation type="journal article" date="2002" name="J. Cell Sci.">
        <title>Activation, processing and trafficking of extracellular heparanase by primary human fibroblasts.</title>
        <authorList>
            <person name="Nadav L."/>
            <person name="Eldor A."/>
            <person name="Yacoby-Zeevi O."/>
            <person name="Zamir E."/>
            <person name="Pecker I."/>
            <person name="Ilan N."/>
            <person name="Geiger B."/>
            <person name="Vlodavsky I."/>
            <person name="Katz B.Z."/>
        </authorList>
    </citation>
    <scope>PROTEOLYTIC PROCESSING</scope>
    <scope>ENZYME ACTIVITY</scope>
    <scope>SUBCELLULAR LOCATION</scope>
</reference>
<reference key="18">
    <citation type="journal article" date="2003" name="Biochem. Biophys. Res. Commun.">
        <title>Heterodimer formation is essential for heparanase enzymatic activity.</title>
        <authorList>
            <person name="Levy-Adam F."/>
            <person name="Miao H.Q."/>
            <person name="Heinrikson R.L."/>
            <person name="Vlodavsky I."/>
            <person name="Ilan N."/>
        </authorList>
    </citation>
    <scope>HETERODIMERIZATION</scope>
    <scope>ENZYME ACTIVITY</scope>
</reference>
<reference key="19">
    <citation type="journal article" date="2003" name="FASEB J.">
        <title>Heparanase mediates cell adhesion independent of its enzymatic activity.</title>
        <authorList>
            <person name="Goldshmidt O."/>
            <person name="Zcharia E."/>
            <person name="Cohen M."/>
            <person name="Aingorn H."/>
            <person name="Cohen I."/>
            <person name="Nadav L."/>
            <person name="Katz B.Z."/>
            <person name="Geiger B."/>
            <person name="Vlodavsky I."/>
        </authorList>
    </citation>
    <scope>FUNCTION</scope>
    <scope>MUTAGENESIS OF GLU-225</scope>
</reference>
<reference key="20">
    <citation type="journal article" date="2004" name="J. Biol. Chem.">
        <title>Secretion of heparanase protein is regulated by glycosylation in human tumor cell lines.</title>
        <authorList>
            <person name="Simizu S."/>
            <person name="Ishida K."/>
            <person name="Wierzba M.K."/>
            <person name="Osada H."/>
        </authorList>
    </citation>
    <scope>GLYCOSYLATION AT ASN-162; ASN-178; ASN-200; ASN-217; ASN-238 AND ASN-459</scope>
    <scope>MUTAGENESIS OF ASN-162; ASN-178; ASN-200; ASN-217; ASN-238 AND ASN-459</scope>
</reference>
<reference key="21">
    <citation type="journal article" date="2004" name="J. Biol. Chem.">
        <title>Heparanase induces endothelial cell migration via protein kinase B/Akt activation.</title>
        <authorList>
            <person name="Gingis-Velitski S."/>
            <person name="Zetser A."/>
            <person name="Flugelman M.Y."/>
            <person name="Vlodavsky I."/>
            <person name="Ilan N."/>
        </authorList>
    </citation>
    <scope>FUNCTION</scope>
</reference>
<reference key="22">
    <citation type="journal article" date="2004" name="J. Biol. Chem.">
        <title>Heparanase uptake is mediated by cell membrane heparan sulfate proteoglycans.</title>
        <authorList>
            <person name="Gingis-Velitski S."/>
            <person name="Zetser A."/>
            <person name="Kaplan V."/>
            <person name="Ben-Zaken O."/>
            <person name="Cohen E."/>
            <person name="Levy-Adam F."/>
            <person name="Bashenko Y."/>
            <person name="Flugelman M.Y."/>
            <person name="Vlodavsky I."/>
            <person name="Ilan N."/>
        </authorList>
    </citation>
    <scope>SUBCELLULAR LOCATION</scope>
</reference>
<reference key="23">
    <citation type="journal article" date="2004" name="J. Cell Sci.">
        <title>Processing and activation of latent heparanase occurs in lysosomes.</title>
        <authorList>
            <person name="Zetser A."/>
            <person name="Levy-Adam F."/>
            <person name="Kaplan V."/>
            <person name="Gingis-Velitski S."/>
            <person name="Bashenko Y."/>
            <person name="Schubert S."/>
            <person name="Flugelman M.Y."/>
            <person name="Vlodavsky I."/>
            <person name="Ilan N."/>
        </authorList>
    </citation>
    <scope>PROTEOLYTIC PROCESSING</scope>
    <scope>SUBCELLULAR LOCATION</scope>
</reference>
<reference key="24">
    <citation type="journal article" date="2005" name="FEBS Lett.">
        <title>Heparanase processing by lysosomal/endosomal protein preparation.</title>
        <authorList>
            <person name="Cohen E."/>
            <person name="Atzmon R."/>
            <person name="Vlodavsky I."/>
            <person name="Ilan N."/>
        </authorList>
    </citation>
    <scope>BIOPHYSICOCHEMICAL PROPERTIES</scope>
    <scope>PROTEOLYTIC PROCESSING</scope>
    <scope>SUBCELLULAR LOCATION</scope>
</reference>
<reference key="25">
    <citation type="journal article" date="2005" name="J. Biol. Chem.">
        <title>Site-directed mutagenesis, proteolytic cleavage, and activation of human proheparanase.</title>
        <authorList>
            <person name="Abboud-Jarrous G."/>
            <person name="Rangini-Guetta Z."/>
            <person name="Aingorn H."/>
            <person name="Atzmon R."/>
            <person name="Elgavish S."/>
            <person name="Peretz T."/>
            <person name="Vlodavsky I."/>
        </authorList>
    </citation>
    <scope>SUBCELLULAR LOCATION</scope>
    <scope>PROTEOLYTIC PROCESSING</scope>
    <scope>MUTAGENESIS OF TYR-156</scope>
</reference>
<reference key="26">
    <citation type="journal article" date="2005" name="J. Biol. Chem.">
        <title>Identification and characterization of heparin/heparan sulfate binding domains of the endoglycosidase heparanase.</title>
        <authorList>
            <person name="Levy-Adam F."/>
            <person name="Abboud-Jarrous G."/>
            <person name="Guerrini M."/>
            <person name="Beccati D."/>
            <person name="Vlodavsky I."/>
            <person name="Ilan N."/>
        </authorList>
    </citation>
    <scope>HEPARAN SULFATE-BINDING DOMAINS</scope>
    <scope>MUTAGENESIS OF LYS-158 AND LYS-161</scope>
</reference>
<reference key="27">
    <citation type="journal article" date="2006" name="Cancer Res.">
        <title>Heparanase induces vascular endothelial growth factor expression: correlation with p38 phosphorylation levels and Src activation.</title>
        <authorList>
            <person name="Zetser A."/>
            <person name="Bashenko Y."/>
            <person name="Edovitsky E."/>
            <person name="Levy-Adam F."/>
            <person name="Vlodavsky I."/>
            <person name="Ilan N."/>
        </authorList>
    </citation>
    <scope>FUNCTION</scope>
</reference>
<reference key="28">
    <citation type="journal article" date="2006" name="Mol. Cell. Proteomics">
        <title>Elucidation of N-glycosylation sites on human platelet proteins: a glycoproteomic approach.</title>
        <authorList>
            <person name="Lewandrowski U."/>
            <person name="Moebius J."/>
            <person name="Walter U."/>
            <person name="Sickmann A."/>
        </authorList>
    </citation>
    <scope>GLYCOSYLATION [LARGE SCALE ANALYSIS] AT ASN-217</scope>
    <source>
        <tissue>Platelet</tissue>
    </source>
</reference>
<reference key="29">
    <citation type="journal article" date="2008" name="Exp. Dermatol.">
        <title>Heparanase 1: a key participant of inner root sheath differentiation program and hair follicle homeostasis.</title>
        <authorList>
            <person name="Malgouries S."/>
            <person name="Donovan M."/>
            <person name="Thibaut S."/>
            <person name="Bernard B.A."/>
        </authorList>
    </citation>
    <scope>TISSUE SPECIFICITY</scope>
    <scope>FUNCTION</scope>
</reference>
<reference key="30">
    <citation type="journal article" date="2008" name="Int. J. Cancer">
        <title>Heparanase induces VEGF C and facilitates tumor lymphangiogenesis.</title>
        <authorList>
            <person name="Cohen-Kaplan V."/>
            <person name="Naroditsky I."/>
            <person name="Zetser A."/>
            <person name="Ilan N."/>
            <person name="Vlodavsky I."/>
            <person name="Doweck I."/>
        </authorList>
    </citation>
    <scope>FUNCTION</scope>
</reference>
<reference key="31">
    <citation type="journal article" date="2009" name="Cancer Res.">
        <title>Structure-function approach identifies a COOH-terminal domain that mediates heparanase signaling.</title>
        <authorList>
            <person name="Fux L."/>
            <person name="Feibish N."/>
            <person name="Cohen-Kaplan V."/>
            <person name="Gingis-Velitski S."/>
            <person name="Feld S."/>
            <person name="Geffen C."/>
            <person name="Vlodavsky I."/>
            <person name="Ilan N."/>
        </authorList>
    </citation>
    <scope>FUNCTION OF THE C-TERMINAL DOMAIN</scope>
    <scope>SUBCELLULAR LOCATION</scope>
    <scope>MUTAGENESIS OF VAL-414; LYS-417; PRO-525; PHE-527; SER-528; TYR-529; PHE-531; VAL-533; ILE-534; ARG-535; ASN-536; ALA-537; LYS-538; VAL-539; ALA-540; ALA-541 AND CYS-542</scope>
</reference>
<reference key="32">
    <citation type="journal article" date="2009" name="J. Proteome Res.">
        <title>Glycoproteomics analysis of human liver tissue by combination of multiple enzyme digestion and hydrazide chemistry.</title>
        <authorList>
            <person name="Chen R."/>
            <person name="Jiang X."/>
            <person name="Sun D."/>
            <person name="Han G."/>
            <person name="Wang F."/>
            <person name="Ye M."/>
            <person name="Wang L."/>
            <person name="Zou H."/>
        </authorList>
    </citation>
    <scope>GLYCOSYLATION [LARGE SCALE ANALYSIS] AT ASN-217 AND ASN-238</scope>
    <source>
        <tissue>Liver</tissue>
    </source>
</reference>
<reference key="33">
    <citation type="journal article" date="2010" name="Blood">
        <title>Heparanase-enhanced shedding of syndecan-1 by myeloma cells promotes endothelial invasion and angiogenesis.</title>
        <authorList>
            <person name="Purushothaman A."/>
            <person name="Uyama T."/>
            <person name="Kobayashi F."/>
            <person name="Yamada S."/>
            <person name="Sugahara K."/>
            <person name="Rapraeger A.C."/>
            <person name="Sanderson R.D."/>
        </authorList>
    </citation>
    <scope>FUNCTION</scope>
</reference>
<reference key="34">
    <citation type="journal article" date="2010" name="Haematologica">
        <title>Heparanase enhances the generation of activated factor X in the presence of tissue factor and activated factor VII.</title>
        <authorList>
            <person name="Nadir Y."/>
            <person name="Brenner B."/>
            <person name="Fux L."/>
            <person name="Shafat I."/>
            <person name="Attias J."/>
            <person name="Vlodavsky I."/>
        </authorList>
    </citation>
    <scope>INTERACTION WITH TF</scope>
    <scope>ENZYME ACTIVITY</scope>
</reference>
<reference key="35">
    <citation type="journal article" date="2010" name="Int. J. Biochem. Cell Biol.">
        <title>Histidine-rich glycoprotein binds heparanase and regulates its enzymatic activity and cell surface interactions.</title>
        <authorList>
            <person name="Poon I.K."/>
            <person name="Yee D.Y."/>
            <person name="Jones A.L."/>
            <person name="Wood R.J."/>
            <person name="Davis D.S."/>
            <person name="Freeman C."/>
            <person name="Parish C.R."/>
            <person name="Hulett M.D."/>
        </authorList>
    </citation>
    <scope>INTERACTION WITH HRG</scope>
    <scope>ENZYME ACTIVITY</scope>
    <scope>FUNCTION</scope>
</reference>
<reference key="36">
    <citation type="journal article" date="2010" name="J. Biol. Chem.">
        <title>Unraveling the specificity of heparanase utilizing synthetic substrates.</title>
        <authorList>
            <person name="Peterson S.B."/>
            <person name="Liu J."/>
        </authorList>
    </citation>
    <scope>CATALYTIC ACTIVITY</scope>
    <scope>FUNCTION</scope>
</reference>
<reference key="37">
    <citation type="journal article" date="2010" name="J. Biol. Chem.">
        <title>Heparanase 2 interacts with heparan sulfate with high affinity and inhibits heparanase activity.</title>
        <authorList>
            <person name="Levy-Adam F."/>
            <person name="Feld S."/>
            <person name="Cohen-Kaplan V."/>
            <person name="Shteingauz A."/>
            <person name="Gross M."/>
            <person name="Arvatz G."/>
            <person name="Naroditsky I."/>
            <person name="Ilan N."/>
            <person name="Doweck I."/>
            <person name="Vlodavsky I."/>
        </authorList>
    </citation>
    <scope>INTERACTION WITH HPSE2</scope>
</reference>
<reference key="38">
    <citation type="journal article" date="2010" name="J. Orthop. Res.">
        <title>Heparanase in primary human osteoblasts.</title>
        <authorList>
            <person name="Smith P.N."/>
            <person name="Freeman C."/>
            <person name="Yu D."/>
            <person name="Chen M."/>
            <person name="Gatenby P.A."/>
            <person name="Parish C.R."/>
            <person name="Li R.W."/>
        </authorList>
    </citation>
    <scope>FUNCTION</scope>
    <scope>TISSUE SPECIFICITY</scope>
    <scope>SUBCELLULAR LOCATION</scope>
</reference>
<reference key="39">
    <citation type="journal article" date="2011" name="J. Biol. Chem.">
        <title>Heparanase plays a dual role in driving hepatocyte growth factor (HGF) signaling by enhancing HGF expression and activity.</title>
        <authorList>
            <person name="Ramani V.C."/>
            <person name="Yang Y."/>
            <person name="Ren Y."/>
            <person name="Nan L."/>
            <person name="Sanderson R.D."/>
        </authorList>
    </citation>
    <scope>FUNCTION</scope>
</reference>
<reference evidence="44 45 46 47 48" key="40">
    <citation type="journal article" date="2015" name="Nat. Struct. Mol. Biol.">
        <title>Structural characterization of human heparanase reveals insights into substrate recognition.</title>
        <authorList>
            <person name="Wu L."/>
            <person name="Viola C.M."/>
            <person name="Brzozowski A.M."/>
            <person name="Davies G.J."/>
        </authorList>
    </citation>
    <scope>X-RAY CRYSTALLOGRAPHY (1.63 ANGSTROMS) OF 158-543 AND 36-109 IN COMPLEX WITH HEPARIN</scope>
    <scope>GLYCOSYLATION AT ASN-162; ASN-200; ASN-217; ASN-238 AND ASN-459</scope>
    <scope>BIOPHYSICOCHEMICAL PROPERTIES</scope>
</reference>
<reference key="41">
    <citation type="journal article" date="2016" name="Nat. Struct. Mol. Biol.">
        <title>Corrigendum: Structural characterization of human heparanase reveals insights into substrate recognition.</title>
        <authorList>
            <person name="Wu L."/>
            <person name="Viola C.M."/>
            <person name="Brzozowski A.M."/>
            <person name="Davies G.J."/>
        </authorList>
    </citation>
    <scope>ERRATUM OF PUBMED:26575439</scope>
</reference>
<reference evidence="49 50 51 52" key="42">
    <citation type="journal article" date="2017" name="Nat. Chem. Biol.">
        <title>Activity-based probes for functional interrogation of retaining beta-glucuronidases.</title>
        <authorList>
            <person name="Wu L."/>
            <person name="Jiang J."/>
            <person name="Jin Y."/>
            <person name="Kallemeijn W.W."/>
            <person name="Kuo C.L."/>
            <person name="Artola M."/>
            <person name="Dai W."/>
            <person name="van Elk C."/>
            <person name="van Eijk M."/>
            <person name="van der Marel G.A."/>
            <person name="Codee J.D.C."/>
            <person name="Florea B.I."/>
            <person name="Aerts J.M.F.G."/>
            <person name="Overkleeft H.S."/>
            <person name="Davies G.J."/>
        </authorList>
    </citation>
    <scope>X-RAY CRYSTALLOGRAPHY (1.57 ANGSTROMS) OF 36-543 OF PRECURSOR</scope>
    <scope>X-RAY CRYSTALLOGRAPHY (1.57 ANGSTROMS) OF 158-543 AND 36-109</scope>
</reference>
<reference key="43">
    <citation type="journal article" date="2004" name="World J. Gastroenterol.">
        <title>Heparanase mRNA expression and point mutation in hepatocellular carcinoma.</title>
        <authorList>
            <person name="Chen X.P."/>
            <person name="Liu Y.B."/>
            <person name="Rui J."/>
            <person name="Peng S.Y."/>
            <person name="Peng C.H."/>
            <person name="Zhou Z.Y."/>
            <person name="Shi L.H."/>
            <person name="Shen H.W."/>
            <person name="Xu B."/>
        </authorList>
    </citation>
    <scope>VARIANT SER-260</scope>
</reference>
<comment type="function">
    <text evidence="9 12 15 23 25 26 28 29 30 31 32 35">Endoglycosidase that cleaves heparan sulfate proteoglycans (HSPGs) into heparan sulfate side chains and core proteoglycans. Participates in extracellular matrix (ECM) degradation and remodeling. Selectively cleaves the linkage between a glucuronic acid unit and an N-sulfo glucosamine unit carrying either a 3-O-sulfo or a 6-O-sulfo group. Can also cleave the linkage between a glucuronic acid unit and an N-sulfo glucosamine unit carrying a 2-O-sulfo group, but not linkages between a glucuronic acid unit and a 2-O-sulfated iduronic acid moiety. It is essentially inactive at neutral pH but becomes active under acidic conditions such as during tumor invasion and in inflammatory processes. Facilitates cell migration associated with metastasis, wound healing and inflammation. Enhances shedding of syndecans, and increases endothelial invasion and angiogenesis in myelomas. Acts as a procoagulant by increasing the generation of activation factor X in the presence of tissue factor and activation factor VII. Increases cell adhesion to the extracellular matrix (ECM), independent of its enzymatic activity. Induces AKT1/PKB phosphorylation via lipid rafts increasing cell mobility and invasion. Heparin increases this AKT1/PKB activation. Regulates osteogenesis. Enhances angiogenesis through up-regulation of SRC-mediated activation of VEGF. Implicated in hair follicle inner root sheath differentiation and hair homeostasis.</text>
</comment>
<comment type="catalytic activity">
    <reaction evidence="8 9 13 30 32 34">
        <text>endohydrolysis of (1-&gt;4)-beta-D-glycosidic bonds of heparan sulfate chains in heparan sulfate proteoglycan.</text>
        <dbReference type="EC" id="3.2.1.166"/>
    </reaction>
</comment>
<comment type="activity regulation">
    <text evidence="1">Inhibited by EDTA, laminarin sulfate and, to a lower extent, by heparin and sulfamin and activated by calcium and magnesium.</text>
</comment>
<comment type="biophysicochemical properties">
    <kinetics>
        <KM evidence="36">7.7 uM for M09 S05a, a heparin sulfate analog with a nonasaccharide with N-sulfation and a single GlcNS(6S) toward the reducing end</KM>
        <text evidence="36">kcat is 0.53 sec(-1) for M09 S05a.</text>
    </kinetics>
    <phDependence>
        <text evidence="5 6 11 21">Optimum pH is 4-6.</text>
    </phDependence>
</comment>
<comment type="subunit">
    <text evidence="10 11 32 33 34">Heterodimer; heterodimer formation between the 8 kDa and the 50 kDa subunits is required for enzyme activity. Interacts with TF; the interaction, inhibited by heparin, enhances the generation of activated factor X and activates coagulation. Interacts with HRG; the interaction is enhanced at acidic pH, partially inhibits binding of HPSE to cell surface receptors and modulates its enzymatic activity. Interacts with SDC1; the interaction enhances the shedding of SDC1. Interacts with HPSE2.</text>
</comment>
<comment type="subcellular location">
    <subcellularLocation>
        <location>Lysosome membrane</location>
        <topology>Peripheral membrane protein</topology>
    </subcellularLocation>
    <subcellularLocation>
        <location>Secreted</location>
    </subcellularLocation>
    <subcellularLocation>
        <location>Nucleus</location>
    </subcellularLocation>
    <text evidence="1">Proheparanase is secreted via vesicles of the Golgi. Interacts with cell membrane heparan sulfate proteoglycans (HSPGs). Endocytosed and accumulates in endosomes. Transferred to lysosomes where it is proteolytically cleaved to produce the active enzyme. Under certain stimuli, transferred to the cell surface. Associates with lipid rafts. Colocalizes with SDC1 in endosomal/lysosomal vesicles. Accumulates in perinuclear lysosomal vesicles. Heparin retains proheparanase in the extracellular medium (By similarity).</text>
</comment>
<comment type="alternative products">
    <event type="alternative splicing"/>
    <isoform>
        <id>Q9Y251-1</id>
        <name>1</name>
        <sequence type="displayed"/>
    </isoform>
    <isoform>
        <id>Q9Y251-2</id>
        <name>2</name>
        <name>55 kDa</name>
        <name>splice 5</name>
        <sequence type="described" ref="VSP_044537"/>
    </isoform>
    <isoform>
        <id>Q9Y251-3</id>
        <name>3</name>
        <name>ex9-10del</name>
        <sequence type="described" ref="VSP_044664"/>
    </isoform>
    <isoform>
        <id>Q9Y251-4</id>
        <name>4</name>
        <name>ex10del</name>
        <sequence type="described" ref="VSP_053730 VSP_053731"/>
    </isoform>
</comment>
<comment type="tissue specificity">
    <text evidence="3 4 6 25 31">Highly expressed in placenta and spleen and weakly expressed in lymph node, thymus, peripheral blood leukocytes, bone marrow, endothelial cells, fetal liver and tumor tissues. Also expressed in hair follicles, specifically in both Henle's and Huxley's layers of inner the root sheath (IRS) at anagen phase.</text>
</comment>
<comment type="PTM">
    <text evidence="2 8 10 16 19 21">Proteolytically processed. The cleavage of the 65 kDa form leads to the generation of a linker peptide, and 8 kDa and 50 kDa products. The active form, the 8/50 kDa heterodimer, is resistant to degradation. Complete removal of the linker peptide appears to be a prerequisite to the complete activation of the enzyme.</text>
</comment>
<comment type="PTM">
    <text evidence="2 11 14 22 27">N-glycosylated. Glycosylation of the 50 kDa subunit appears to be essential for its solubility.</text>
</comment>
<comment type="miscellaneous">
    <molecule>Isoform 2</molecule>
    <text evidence="42">Escapes proteolytic cleavage, devoid of HS degradation activity.</text>
</comment>
<comment type="similarity">
    <text evidence="42">Belongs to the glycosyl hydrolase 79 family.</text>
</comment>
<dbReference type="EC" id="3.2.1.166"/>
<dbReference type="EMBL" id="AF152376">
    <property type="protein sequence ID" value="AAD45669.1"/>
    <property type="molecule type" value="mRNA"/>
</dbReference>
<dbReference type="EMBL" id="AF155510">
    <property type="protein sequence ID" value="AAD54941.1"/>
    <property type="molecule type" value="mRNA"/>
</dbReference>
<dbReference type="EMBL" id="AF144325">
    <property type="protein sequence ID" value="AAD41342.1"/>
    <property type="molecule type" value="mRNA"/>
</dbReference>
<dbReference type="EMBL" id="AF165154">
    <property type="protein sequence ID" value="AAD45379.1"/>
    <property type="molecule type" value="mRNA"/>
</dbReference>
<dbReference type="EMBL" id="AF084467">
    <property type="protein sequence ID" value="AAD54516.1"/>
    <property type="molecule type" value="mRNA"/>
</dbReference>
<dbReference type="EMBL" id="AM419200">
    <property type="protein sequence ID" value="CAL91960.1"/>
    <property type="molecule type" value="mRNA"/>
</dbReference>
<dbReference type="EMBL" id="AY948074">
    <property type="protein sequence ID" value="AAX47106.1"/>
    <property type="molecule type" value="mRNA"/>
</dbReference>
<dbReference type="EMBL" id="GQ337901">
    <property type="protein sequence ID" value="ACT98237.1"/>
    <property type="molecule type" value="mRNA"/>
</dbReference>
<dbReference type="EMBL" id="GQ337902">
    <property type="protein sequence ID" value="ACT98238.1"/>
    <property type="molecule type" value="mRNA"/>
</dbReference>
<dbReference type="EMBL" id="AK222986">
    <property type="protein sequence ID" value="BAD96706.1"/>
    <property type="molecule type" value="mRNA"/>
</dbReference>
<dbReference type="EMBL" id="AC114781">
    <property type="status" value="NOT_ANNOTATED_CDS"/>
    <property type="molecule type" value="Genomic_DNA"/>
</dbReference>
<dbReference type="EMBL" id="BC051321">
    <property type="protein sequence ID" value="AAH51321.1"/>
    <property type="molecule type" value="mRNA"/>
</dbReference>
<dbReference type="CCDS" id="CCDS3602.1">
    <molecule id="Q9Y251-1"/>
</dbReference>
<dbReference type="CCDS" id="CCDS54774.1">
    <molecule id="Q9Y251-3"/>
</dbReference>
<dbReference type="CCDS" id="CCDS56337.1">
    <molecule id="Q9Y251-2"/>
</dbReference>
<dbReference type="RefSeq" id="NP_001092010.1">
    <molecule id="Q9Y251-1"/>
    <property type="nucleotide sequence ID" value="NM_001098540.3"/>
</dbReference>
<dbReference type="RefSeq" id="NP_001159970.1">
    <molecule id="Q9Y251-3"/>
    <property type="nucleotide sequence ID" value="NM_001166498.3"/>
</dbReference>
<dbReference type="RefSeq" id="NP_001186759.1">
    <molecule id="Q9Y251-2"/>
    <property type="nucleotide sequence ID" value="NM_001199830.1"/>
</dbReference>
<dbReference type="RefSeq" id="NP_006656.2">
    <molecule id="Q9Y251-1"/>
    <property type="nucleotide sequence ID" value="NM_006665.6"/>
</dbReference>
<dbReference type="PDB" id="5E8M">
    <property type="method" value="X-ray"/>
    <property type="resolution" value="1.75 A"/>
    <property type="chains" value="A=158-543, B=36-109"/>
</dbReference>
<dbReference type="PDB" id="5E97">
    <property type="method" value="X-ray"/>
    <property type="resolution" value="1.63 A"/>
    <property type="chains" value="A=158-543, B=36-109"/>
</dbReference>
<dbReference type="PDB" id="5E98">
    <property type="method" value="X-ray"/>
    <property type="resolution" value="1.63 A"/>
    <property type="chains" value="A=158-543, B=36-109"/>
</dbReference>
<dbReference type="PDB" id="5E9B">
    <property type="method" value="X-ray"/>
    <property type="resolution" value="1.88 A"/>
    <property type="chains" value="A=158-543, B=36-109"/>
</dbReference>
<dbReference type="PDB" id="5E9C">
    <property type="method" value="X-ray"/>
    <property type="resolution" value="1.73 A"/>
    <property type="chains" value="A=158-543, B=36-109"/>
</dbReference>
<dbReference type="PDB" id="5L9Y">
    <property type="method" value="X-ray"/>
    <property type="resolution" value="1.88 A"/>
    <property type="chains" value="A=158-543, B=36-109"/>
</dbReference>
<dbReference type="PDB" id="5L9Z">
    <property type="method" value="X-ray"/>
    <property type="resolution" value="1.57 A"/>
    <property type="chains" value="A=158-543, B=36-109"/>
</dbReference>
<dbReference type="PDB" id="5LA4">
    <property type="method" value="X-ray"/>
    <property type="resolution" value="1.90 A"/>
    <property type="chains" value="A=36-543"/>
</dbReference>
<dbReference type="PDB" id="5LA7">
    <property type="method" value="X-ray"/>
    <property type="resolution" value="1.94 A"/>
    <property type="chains" value="A=36-543"/>
</dbReference>
<dbReference type="PDB" id="6ZDM">
    <property type="method" value="X-ray"/>
    <property type="resolution" value="1.71 A"/>
    <property type="chains" value="AAA=158-543, BBB=36-109"/>
</dbReference>
<dbReference type="PDB" id="7PR7">
    <property type="method" value="X-ray"/>
    <property type="resolution" value="1.52 A"/>
    <property type="chains" value="A=160-543, B=36-109"/>
</dbReference>
<dbReference type="PDB" id="7PR8">
    <property type="method" value="X-ray"/>
    <property type="resolution" value="1.66 A"/>
    <property type="chains" value="A=160-543, B=36-109"/>
</dbReference>
<dbReference type="PDB" id="7PRT">
    <property type="method" value="X-ray"/>
    <property type="resolution" value="1.70 A"/>
    <property type="chains" value="A=158-543, B=36-109"/>
</dbReference>
<dbReference type="PDB" id="7RG8">
    <property type="method" value="X-ray"/>
    <property type="resolution" value="1.30 A"/>
    <property type="chains" value="A=157-543, B=36-109"/>
</dbReference>
<dbReference type="PDB" id="7YI7">
    <property type="method" value="X-ray"/>
    <property type="resolution" value="2.80 A"/>
    <property type="chains" value="A=158-543, B=36-109"/>
</dbReference>
<dbReference type="PDB" id="7YJC">
    <property type="method" value="X-ray"/>
    <property type="resolution" value="2.30 A"/>
    <property type="chains" value="A=158-543, B=36-109"/>
</dbReference>
<dbReference type="PDB" id="8B0B">
    <property type="method" value="X-ray"/>
    <property type="resolution" value="1.95 A"/>
    <property type="chains" value="AAA=160-543, BBB=36-109"/>
</dbReference>
<dbReference type="PDB" id="8B0C">
    <property type="method" value="X-ray"/>
    <property type="resolution" value="2.10 A"/>
    <property type="chains" value="AAA=160-543, BBB=36-109"/>
</dbReference>
<dbReference type="PDB" id="8BAC">
    <property type="method" value="X-ray"/>
    <property type="resolution" value="2.05 A"/>
    <property type="chains" value="AAA=158-543, BBB=36-109"/>
</dbReference>
<dbReference type="PDB" id="8CQI">
    <property type="method" value="X-ray"/>
    <property type="resolution" value="2.10 A"/>
    <property type="chains" value="A=158-543, B=36-109"/>
</dbReference>
<dbReference type="PDB" id="8E07">
    <property type="method" value="X-ray"/>
    <property type="resolution" value="1.80 A"/>
    <property type="chains" value="A=157-543, B=36-109"/>
</dbReference>
<dbReference type="PDB" id="8E08">
    <property type="method" value="X-ray"/>
    <property type="resolution" value="1.93 A"/>
    <property type="chains" value="A=157-543, B=36-109"/>
</dbReference>
<dbReference type="PDB" id="8JYG">
    <property type="method" value="X-ray"/>
    <property type="resolution" value="2.00 A"/>
    <property type="chains" value="A=158-543, B=35-109"/>
</dbReference>
<dbReference type="PDB" id="8OHQ">
    <property type="method" value="X-ray"/>
    <property type="resolution" value="1.70 A"/>
    <property type="chains" value="AAA=160-543, BBB=36-109"/>
</dbReference>
<dbReference type="PDB" id="8OHR">
    <property type="method" value="X-ray"/>
    <property type="resolution" value="1.80 A"/>
    <property type="chains" value="AAA=160-543, BBB=36-109"/>
</dbReference>
<dbReference type="PDBsum" id="5E8M"/>
<dbReference type="PDBsum" id="5E97"/>
<dbReference type="PDBsum" id="5E98"/>
<dbReference type="PDBsum" id="5E9B"/>
<dbReference type="PDBsum" id="5E9C"/>
<dbReference type="PDBsum" id="5L9Y"/>
<dbReference type="PDBsum" id="5L9Z"/>
<dbReference type="PDBsum" id="5LA4"/>
<dbReference type="PDBsum" id="5LA7"/>
<dbReference type="PDBsum" id="6ZDM"/>
<dbReference type="PDBsum" id="7PR7"/>
<dbReference type="PDBsum" id="7PR8"/>
<dbReference type="PDBsum" id="7PRT"/>
<dbReference type="PDBsum" id="7RG8"/>
<dbReference type="PDBsum" id="7YI7"/>
<dbReference type="PDBsum" id="7YJC"/>
<dbReference type="PDBsum" id="8B0B"/>
<dbReference type="PDBsum" id="8B0C"/>
<dbReference type="PDBsum" id="8BAC"/>
<dbReference type="PDBsum" id="8CQI"/>
<dbReference type="PDBsum" id="8E07"/>
<dbReference type="PDBsum" id="8E08"/>
<dbReference type="PDBsum" id="8JYG"/>
<dbReference type="PDBsum" id="8OHQ"/>
<dbReference type="PDBsum" id="8OHR"/>
<dbReference type="SMR" id="Q9Y251"/>
<dbReference type="BioGRID" id="116066">
    <property type="interactions" value="71"/>
</dbReference>
<dbReference type="ComplexPortal" id="CPX-362">
    <property type="entry name" value="Heparanase complex"/>
</dbReference>
<dbReference type="FunCoup" id="Q9Y251">
    <property type="interactions" value="335"/>
</dbReference>
<dbReference type="IntAct" id="Q9Y251">
    <property type="interactions" value="43"/>
</dbReference>
<dbReference type="STRING" id="9606.ENSP00000384262"/>
<dbReference type="BindingDB" id="Q9Y251"/>
<dbReference type="ChEMBL" id="CHEMBL3921"/>
<dbReference type="DrugBank" id="DB06779">
    <property type="generic name" value="Dalteparin"/>
</dbReference>
<dbReference type="DrugBank" id="DB01109">
    <property type="generic name" value="Heparin"/>
</dbReference>
<dbReference type="DrugBank" id="DB04786">
    <property type="generic name" value="Suramin"/>
</dbReference>
<dbReference type="DrugCentral" id="Q9Y251"/>
<dbReference type="GuidetoPHARMACOLOGY" id="2996"/>
<dbReference type="CAZy" id="GH79">
    <property type="family name" value="Glycoside Hydrolase Family 79"/>
</dbReference>
<dbReference type="GlyCosmos" id="Q9Y251">
    <property type="glycosylation" value="6 sites, No reported glycans"/>
</dbReference>
<dbReference type="GlyGen" id="Q9Y251">
    <property type="glycosylation" value="7 sites, 7 N-linked glycans (5 sites)"/>
</dbReference>
<dbReference type="iPTMnet" id="Q9Y251"/>
<dbReference type="PhosphoSitePlus" id="Q9Y251"/>
<dbReference type="BioMuta" id="HPSE"/>
<dbReference type="DMDM" id="296434532"/>
<dbReference type="jPOST" id="Q9Y251"/>
<dbReference type="MassIVE" id="Q9Y251"/>
<dbReference type="PaxDb" id="9606-ENSP00000384262"/>
<dbReference type="PeptideAtlas" id="Q9Y251"/>
<dbReference type="ProteomicsDB" id="19409"/>
<dbReference type="ProteomicsDB" id="20372"/>
<dbReference type="ProteomicsDB" id="85653">
    <molecule id="Q9Y251-1"/>
</dbReference>
<dbReference type="Pumba" id="Q9Y251"/>
<dbReference type="TopDownProteomics" id="Q9Y251-1">
    <molecule id="Q9Y251-1"/>
</dbReference>
<dbReference type="ABCD" id="Q9Y251">
    <property type="antibodies" value="8 sequenced antibodies"/>
</dbReference>
<dbReference type="Antibodypedia" id="4072">
    <property type="antibodies" value="563 antibodies from 34 providers"/>
</dbReference>
<dbReference type="DNASU" id="10855"/>
<dbReference type="Ensembl" id="ENST00000311412.10">
    <molecule id="Q9Y251-1"/>
    <property type="protein sequence ID" value="ENSP00000308107.5"/>
    <property type="gene ID" value="ENSG00000173083.16"/>
</dbReference>
<dbReference type="Ensembl" id="ENST00000405413.6">
    <molecule id="Q9Y251-1"/>
    <property type="protein sequence ID" value="ENSP00000384262.2"/>
    <property type="gene ID" value="ENSG00000173083.16"/>
</dbReference>
<dbReference type="Ensembl" id="ENST00000509906.5">
    <molecule id="Q9Y251-4"/>
    <property type="protein sequence ID" value="ENSP00000421038.1"/>
    <property type="gene ID" value="ENSG00000173083.16"/>
</dbReference>
<dbReference type="Ensembl" id="ENST00000512196.5">
    <molecule id="Q9Y251-3"/>
    <property type="protein sequence ID" value="ENSP00000423265.1"/>
    <property type="gene ID" value="ENSG00000173083.16"/>
</dbReference>
<dbReference type="Ensembl" id="ENST00000513463.1">
    <molecule id="Q9Y251-2"/>
    <property type="protein sequence ID" value="ENSP00000421365.1"/>
    <property type="gene ID" value="ENSG00000173083.16"/>
</dbReference>
<dbReference type="GeneID" id="10855"/>
<dbReference type="KEGG" id="hsa:10855"/>
<dbReference type="MANE-Select" id="ENST00000311412.10">
    <property type="protein sequence ID" value="ENSP00000308107.5"/>
    <property type="RefSeq nucleotide sequence ID" value="NM_001098540.3"/>
    <property type="RefSeq protein sequence ID" value="NP_001092010.1"/>
</dbReference>
<dbReference type="UCSC" id="uc003hoi.4">
    <molecule id="Q9Y251-1"/>
    <property type="organism name" value="human"/>
</dbReference>
<dbReference type="AGR" id="HGNC:5164"/>
<dbReference type="CTD" id="10855"/>
<dbReference type="DisGeNET" id="10855"/>
<dbReference type="GeneCards" id="HPSE"/>
<dbReference type="HGNC" id="HGNC:5164">
    <property type="gene designation" value="HPSE"/>
</dbReference>
<dbReference type="HPA" id="ENSG00000173083">
    <property type="expression patterns" value="Low tissue specificity"/>
</dbReference>
<dbReference type="MIM" id="604724">
    <property type="type" value="gene"/>
</dbReference>
<dbReference type="neXtProt" id="NX_Q9Y251"/>
<dbReference type="OpenTargets" id="ENSG00000173083"/>
<dbReference type="PharmGKB" id="PA29435"/>
<dbReference type="VEuPathDB" id="HostDB:ENSG00000173083"/>
<dbReference type="eggNOG" id="ENOG502QQST">
    <property type="taxonomic scope" value="Eukaryota"/>
</dbReference>
<dbReference type="GeneTree" id="ENSGT00390000004874"/>
<dbReference type="HOGENOM" id="CLU_021823_0_1_1"/>
<dbReference type="InParanoid" id="Q9Y251"/>
<dbReference type="OMA" id="RMYLHCT"/>
<dbReference type="OrthoDB" id="726732at2759"/>
<dbReference type="PAN-GO" id="Q9Y251">
    <property type="GO annotations" value="5 GO annotations based on evolutionary models"/>
</dbReference>
<dbReference type="PhylomeDB" id="Q9Y251"/>
<dbReference type="TreeFam" id="TF328999"/>
<dbReference type="BioCyc" id="MetaCyc:ENSG00000173083-MONOMER"/>
<dbReference type="BRENDA" id="3.2.1.166">
    <property type="organism ID" value="2681"/>
</dbReference>
<dbReference type="PathwayCommons" id="Q9Y251"/>
<dbReference type="Reactome" id="R-HSA-2024096">
    <property type="pathway name" value="HS-GAG degradation"/>
</dbReference>
<dbReference type="Reactome" id="R-HSA-6798695">
    <property type="pathway name" value="Neutrophil degranulation"/>
</dbReference>
<dbReference type="SignaLink" id="Q9Y251"/>
<dbReference type="SIGNOR" id="Q9Y251"/>
<dbReference type="BioGRID-ORCS" id="10855">
    <property type="hits" value="13 hits in 1154 CRISPR screens"/>
</dbReference>
<dbReference type="ChiTaRS" id="HPSE">
    <property type="organism name" value="human"/>
</dbReference>
<dbReference type="EvolutionaryTrace" id="Q9Y251"/>
<dbReference type="GeneWiki" id="Heparanase"/>
<dbReference type="GenomeRNAi" id="10855"/>
<dbReference type="Pharos" id="Q9Y251">
    <property type="development level" value="Tchem"/>
</dbReference>
<dbReference type="PRO" id="PR:Q9Y251"/>
<dbReference type="Proteomes" id="UP000005640">
    <property type="component" value="Chromosome 4"/>
</dbReference>
<dbReference type="RNAct" id="Q9Y251">
    <property type="molecule type" value="protein"/>
</dbReference>
<dbReference type="Bgee" id="ENSG00000173083">
    <property type="expression patterns" value="Expressed in monocyte and 120 other cell types or tissues"/>
</dbReference>
<dbReference type="ExpressionAtlas" id="Q9Y251">
    <property type="expression patterns" value="baseline and differential"/>
</dbReference>
<dbReference type="GO" id="GO:0031012">
    <property type="term" value="C:extracellular matrix"/>
    <property type="evidence" value="ECO:0000318"/>
    <property type="project" value="GO_Central"/>
</dbReference>
<dbReference type="GO" id="GO:0005576">
    <property type="term" value="C:extracellular region"/>
    <property type="evidence" value="ECO:0000304"/>
    <property type="project" value="Reactome"/>
</dbReference>
<dbReference type="GO" id="GO:0005615">
    <property type="term" value="C:extracellular space"/>
    <property type="evidence" value="ECO:0000318"/>
    <property type="project" value="GO_Central"/>
</dbReference>
<dbReference type="GO" id="GO:0043231">
    <property type="term" value="C:intracellular membrane-bounded organelle"/>
    <property type="evidence" value="ECO:0000314"/>
    <property type="project" value="HPA"/>
</dbReference>
<dbReference type="GO" id="GO:0043202">
    <property type="term" value="C:lysosomal lumen"/>
    <property type="evidence" value="ECO:0000304"/>
    <property type="project" value="Reactome"/>
</dbReference>
<dbReference type="GO" id="GO:0005765">
    <property type="term" value="C:lysosomal membrane"/>
    <property type="evidence" value="ECO:0007669"/>
    <property type="project" value="UniProtKB-SubCell"/>
</dbReference>
<dbReference type="GO" id="GO:0005764">
    <property type="term" value="C:lysosome"/>
    <property type="evidence" value="ECO:0000314"/>
    <property type="project" value="UniProtKB"/>
</dbReference>
<dbReference type="GO" id="GO:0045121">
    <property type="term" value="C:membrane raft"/>
    <property type="evidence" value="ECO:0007669"/>
    <property type="project" value="Ensembl"/>
</dbReference>
<dbReference type="GO" id="GO:0005654">
    <property type="term" value="C:nucleoplasm"/>
    <property type="evidence" value="ECO:0000314"/>
    <property type="project" value="HPA"/>
</dbReference>
<dbReference type="GO" id="GO:0005634">
    <property type="term" value="C:nucleus"/>
    <property type="evidence" value="ECO:0000314"/>
    <property type="project" value="UniProtKB"/>
</dbReference>
<dbReference type="GO" id="GO:0035580">
    <property type="term" value="C:specific granule lumen"/>
    <property type="evidence" value="ECO:0000304"/>
    <property type="project" value="Reactome"/>
</dbReference>
<dbReference type="GO" id="GO:0004566">
    <property type="term" value="F:beta-glucuronidase activity"/>
    <property type="evidence" value="ECO:0000304"/>
    <property type="project" value="ProtInc"/>
</dbReference>
<dbReference type="GO" id="GO:0030305">
    <property type="term" value="F:heparanase activity"/>
    <property type="evidence" value="ECO:0000314"/>
    <property type="project" value="UniProtKB"/>
</dbReference>
<dbReference type="GO" id="GO:0045545">
    <property type="term" value="F:syndecan binding"/>
    <property type="evidence" value="ECO:0000314"/>
    <property type="project" value="UniProtKB"/>
</dbReference>
<dbReference type="GO" id="GO:0060055">
    <property type="term" value="P:angiogenesis involved in wound healing"/>
    <property type="evidence" value="ECO:0000318"/>
    <property type="project" value="GO_Central"/>
</dbReference>
<dbReference type="GO" id="GO:0007160">
    <property type="term" value="P:cell-matrix adhesion"/>
    <property type="evidence" value="ECO:0000314"/>
    <property type="project" value="UniProtKB"/>
</dbReference>
<dbReference type="GO" id="GO:0061028">
    <property type="term" value="P:establishment of endothelial barrier"/>
    <property type="evidence" value="ECO:0007669"/>
    <property type="project" value="Ensembl"/>
</dbReference>
<dbReference type="GO" id="GO:0030200">
    <property type="term" value="P:heparan sulfate proteoglycan catabolic process"/>
    <property type="evidence" value="ECO:0000314"/>
    <property type="project" value="UniProtKB"/>
</dbReference>
<dbReference type="GO" id="GO:0030202">
    <property type="term" value="P:heparin proteoglycan metabolic process"/>
    <property type="evidence" value="ECO:0007669"/>
    <property type="project" value="Ensembl"/>
</dbReference>
<dbReference type="GO" id="GO:0030194">
    <property type="term" value="P:positive regulation of blood coagulation"/>
    <property type="evidence" value="ECO:0000314"/>
    <property type="project" value="UniProtKB"/>
</dbReference>
<dbReference type="GO" id="GO:0051798">
    <property type="term" value="P:positive regulation of hair follicle development"/>
    <property type="evidence" value="ECO:0007669"/>
    <property type="project" value="Ensembl"/>
</dbReference>
<dbReference type="GO" id="GO:0033690">
    <property type="term" value="P:positive regulation of osteoblast proliferation"/>
    <property type="evidence" value="ECO:0000314"/>
    <property type="project" value="UniProtKB"/>
</dbReference>
<dbReference type="GO" id="GO:0051897">
    <property type="term" value="P:positive regulation of phosphatidylinositol 3-kinase/protein kinase B signal transduction"/>
    <property type="evidence" value="ECO:0000314"/>
    <property type="project" value="UniProtKB"/>
</dbReference>
<dbReference type="GO" id="GO:0010575">
    <property type="term" value="P:positive regulation of vascular endothelial growth factor production"/>
    <property type="evidence" value="ECO:0000314"/>
    <property type="project" value="UniProtKB"/>
</dbReference>
<dbReference type="GO" id="GO:0071806">
    <property type="term" value="P:protein transmembrane transport"/>
    <property type="evidence" value="ECO:0007669"/>
    <property type="project" value="Ensembl"/>
</dbReference>
<dbReference type="GO" id="GO:0006029">
    <property type="term" value="P:proteoglycan metabolic process"/>
    <property type="evidence" value="ECO:0000304"/>
    <property type="project" value="ProtInc"/>
</dbReference>
<dbReference type="GO" id="GO:0051797">
    <property type="term" value="P:regulation of hair follicle development"/>
    <property type="evidence" value="ECO:0000314"/>
    <property type="project" value="UniProtKB"/>
</dbReference>
<dbReference type="GO" id="GO:0046677">
    <property type="term" value="P:response to antibiotic"/>
    <property type="evidence" value="ECO:0007669"/>
    <property type="project" value="Ensembl"/>
</dbReference>
<dbReference type="GO" id="GO:0061042">
    <property type="term" value="P:vascular wound healing"/>
    <property type="evidence" value="ECO:0007669"/>
    <property type="project" value="Ensembl"/>
</dbReference>
<dbReference type="FunFam" id="3.20.20.80:FF:000161">
    <property type="entry name" value="Heparanase"/>
    <property type="match status" value="1"/>
</dbReference>
<dbReference type="FunFam" id="3.20.20.80:FF:000167">
    <property type="entry name" value="Heparanase"/>
    <property type="match status" value="1"/>
</dbReference>
<dbReference type="Gene3D" id="3.20.20.80">
    <property type="entry name" value="Glycosidases"/>
    <property type="match status" value="1"/>
</dbReference>
<dbReference type="InterPro" id="IPR005199">
    <property type="entry name" value="Glyco_hydro_79"/>
</dbReference>
<dbReference type="InterPro" id="IPR017853">
    <property type="entry name" value="Glycoside_hydrolase_SF"/>
</dbReference>
<dbReference type="PANTHER" id="PTHR46145">
    <property type="entry name" value="HEPARANASE"/>
    <property type="match status" value="1"/>
</dbReference>
<dbReference type="PANTHER" id="PTHR46145:SF3">
    <property type="entry name" value="HEPARANASE"/>
    <property type="match status" value="1"/>
</dbReference>
<dbReference type="Pfam" id="PF03662">
    <property type="entry name" value="Glyco_hydro_79n"/>
    <property type="match status" value="1"/>
</dbReference>
<dbReference type="SUPFAM" id="SSF51445">
    <property type="entry name" value="(Trans)glycosidases"/>
    <property type="match status" value="1"/>
</dbReference>